<protein>
    <recommendedName>
        <fullName>Transmembrane protein 17A</fullName>
    </recommendedName>
</protein>
<evidence type="ECO:0000250" key="1"/>
<evidence type="ECO:0000255" key="2"/>
<evidence type="ECO:0000305" key="3"/>
<reference key="1">
    <citation type="submission" date="2005-01" db="EMBL/GenBank/DDBJ databases">
        <authorList>
            <consortium name="NIH - Xenopus Gene Collection (XGC) project"/>
        </authorList>
    </citation>
    <scope>NUCLEOTIDE SEQUENCE [LARGE SCALE MRNA]</scope>
</reference>
<proteinExistence type="evidence at transcript level"/>
<feature type="chain" id="PRO_0000255264" description="Transmembrane protein 17A">
    <location>
        <begin position="1"/>
        <end position="187"/>
    </location>
</feature>
<feature type="transmembrane region" description="Helical" evidence="2">
    <location>
        <begin position="49"/>
        <end position="69"/>
    </location>
</feature>
<feature type="transmembrane region" description="Helical" evidence="2">
    <location>
        <begin position="82"/>
        <end position="102"/>
    </location>
</feature>
<feature type="transmembrane region" description="Helical" evidence="2">
    <location>
        <begin position="114"/>
        <end position="134"/>
    </location>
</feature>
<feature type="transmembrane region" description="Helical" evidence="2">
    <location>
        <begin position="146"/>
        <end position="166"/>
    </location>
</feature>
<organism>
    <name type="scientific">Xenopus tropicalis</name>
    <name type="common">Western clawed frog</name>
    <name type="synonym">Silurana tropicalis</name>
    <dbReference type="NCBI Taxonomy" id="8364"/>
    <lineage>
        <taxon>Eukaryota</taxon>
        <taxon>Metazoa</taxon>
        <taxon>Chordata</taxon>
        <taxon>Craniata</taxon>
        <taxon>Vertebrata</taxon>
        <taxon>Euteleostomi</taxon>
        <taxon>Amphibia</taxon>
        <taxon>Batrachia</taxon>
        <taxon>Anura</taxon>
        <taxon>Pipoidea</taxon>
        <taxon>Pipidae</taxon>
        <taxon>Xenopodinae</taxon>
        <taxon>Xenopus</taxon>
        <taxon>Silurana</taxon>
    </lineage>
</organism>
<sequence>MAQAAGVRRQLDSLTRNIFLRDVGRTVPEKSGAPLTGDSEVAPSVSLQIFLYFNAFYFPFWWVCYVIMLQLKYVLLPDYYKFILVVLLILMSVIEVIRLYLGYSGNLQEKVPELAGFCLLSILLQLPLLLFLLCDPGLEPLPLERAVHGILTAFLLIQIPISIFALRKATRHLAGRFHLLGDLDGRA</sequence>
<name>TM17A_XENTR</name>
<accession>Q5HZD4</accession>
<gene>
    <name type="primary">tmem17-a</name>
</gene>
<dbReference type="EMBL" id="BC089071">
    <property type="protein sequence ID" value="AAH89071.1"/>
    <property type="molecule type" value="mRNA"/>
</dbReference>
<dbReference type="RefSeq" id="NP_001015683.1">
    <property type="nucleotide sequence ID" value="NM_001015683.1"/>
</dbReference>
<dbReference type="FunCoup" id="Q5HZD4">
    <property type="interactions" value="94"/>
</dbReference>
<dbReference type="DNASU" id="548354"/>
<dbReference type="GeneID" id="548354"/>
<dbReference type="KEGG" id="xtr:548354"/>
<dbReference type="AGR" id="Xenbase:XB-GENE-6456878"/>
<dbReference type="CTD" id="548354"/>
<dbReference type="Xenbase" id="XB-GENE-6456878">
    <property type="gene designation" value="tmem17l"/>
</dbReference>
<dbReference type="InParanoid" id="Q5HZD4"/>
<dbReference type="OMA" id="LWWVSCI"/>
<dbReference type="OrthoDB" id="311720at2759"/>
<dbReference type="PhylomeDB" id="Q5HZD4"/>
<dbReference type="Proteomes" id="UP000008143">
    <property type="component" value="Chromosome 4"/>
</dbReference>
<dbReference type="GO" id="GO:0060170">
    <property type="term" value="C:ciliary membrane"/>
    <property type="evidence" value="ECO:0000250"/>
    <property type="project" value="UniProtKB"/>
</dbReference>
<dbReference type="GO" id="GO:0035869">
    <property type="term" value="C:ciliary transition zone"/>
    <property type="evidence" value="ECO:0000250"/>
    <property type="project" value="UniProtKB"/>
</dbReference>
<dbReference type="GO" id="GO:0036038">
    <property type="term" value="C:MKS complex"/>
    <property type="evidence" value="ECO:0000250"/>
    <property type="project" value="UniProtKB"/>
</dbReference>
<dbReference type="GO" id="GO:0060271">
    <property type="term" value="P:cilium assembly"/>
    <property type="evidence" value="ECO:0000250"/>
    <property type="project" value="UniProtKB"/>
</dbReference>
<dbReference type="GO" id="GO:0007224">
    <property type="term" value="P:smoothened signaling pathway"/>
    <property type="evidence" value="ECO:0000250"/>
    <property type="project" value="UniProtKB"/>
</dbReference>
<dbReference type="InterPro" id="IPR019184">
    <property type="entry name" value="Uncharacterised_TM-17"/>
</dbReference>
<dbReference type="PANTHER" id="PTHR13531">
    <property type="entry name" value="GEO07735P1-RELATED-RELATED"/>
    <property type="match status" value="1"/>
</dbReference>
<dbReference type="PANTHER" id="PTHR13531:SF14">
    <property type="entry name" value="TRANSMEMBRANE PROTEIN 17"/>
    <property type="match status" value="1"/>
</dbReference>
<dbReference type="Pfam" id="PF09799">
    <property type="entry name" value="Transmemb_17"/>
    <property type="match status" value="1"/>
</dbReference>
<keyword id="KW-1003">Cell membrane</keyword>
<keyword id="KW-0966">Cell projection</keyword>
<keyword id="KW-0969">Cilium</keyword>
<keyword id="KW-0970">Cilium biogenesis/degradation</keyword>
<keyword id="KW-0472">Membrane</keyword>
<keyword id="KW-1185">Reference proteome</keyword>
<keyword id="KW-0812">Transmembrane</keyword>
<keyword id="KW-1133">Transmembrane helix</keyword>
<comment type="function">
    <text evidence="1">Transmembrane component of the tectonic-like complex, a complex localized at the transition zone of primary cilia and acting as a barrier that prevents diffusion of transmembrane proteins between the cilia and plasma membranes. Required for ciliogenesis and sonic hedgehog/SHH signaling (By similarity).</text>
</comment>
<comment type="subunit">
    <text evidence="1">Part of the tectonic-like complex (also named B9 complex).</text>
</comment>
<comment type="subcellular location">
    <subcellularLocation>
        <location evidence="1">Cell projection</location>
        <location evidence="1">Cilium membrane</location>
        <topology evidence="1">Multi-pass membrane protein</topology>
    </subcellularLocation>
    <text evidence="1">Localizes to the transition zone of primary cilia.</text>
</comment>
<comment type="similarity">
    <text evidence="3">Belongs to the TMEM17 family.</text>
</comment>